<evidence type="ECO:0000255" key="1">
    <source>
        <dbReference type="HAMAP-Rule" id="MF_00083"/>
    </source>
</evidence>
<proteinExistence type="inferred from homology"/>
<comment type="function">
    <text evidence="1">Hydrolyzes ribosome-free peptidyl-tRNAs (with 1 or more amino acids incorporated), which drop off the ribosome during protein synthesis, or as a result of ribosome stalling.</text>
</comment>
<comment type="function">
    <text evidence="1">Catalyzes the release of premature peptidyl moieties from peptidyl-tRNA molecules trapped in stalled 50S ribosomal subunits, and thus maintains levels of free tRNAs and 50S ribosomes.</text>
</comment>
<comment type="catalytic activity">
    <reaction evidence="1">
        <text>an N-acyl-L-alpha-aminoacyl-tRNA + H2O = an N-acyl-L-amino acid + a tRNA + H(+)</text>
        <dbReference type="Rhea" id="RHEA:54448"/>
        <dbReference type="Rhea" id="RHEA-COMP:10123"/>
        <dbReference type="Rhea" id="RHEA-COMP:13883"/>
        <dbReference type="ChEBI" id="CHEBI:15377"/>
        <dbReference type="ChEBI" id="CHEBI:15378"/>
        <dbReference type="ChEBI" id="CHEBI:59874"/>
        <dbReference type="ChEBI" id="CHEBI:78442"/>
        <dbReference type="ChEBI" id="CHEBI:138191"/>
        <dbReference type="EC" id="3.1.1.29"/>
    </reaction>
</comment>
<comment type="subunit">
    <text evidence="1">Monomer.</text>
</comment>
<comment type="subcellular location">
    <subcellularLocation>
        <location evidence="1">Cytoplasm</location>
    </subcellularLocation>
</comment>
<comment type="similarity">
    <text evidence="1">Belongs to the PTH family.</text>
</comment>
<protein>
    <recommendedName>
        <fullName evidence="1">Peptidyl-tRNA hydrolase</fullName>
        <shortName evidence="1">Pth</shortName>
        <ecNumber evidence="1">3.1.1.29</ecNumber>
    </recommendedName>
</protein>
<feature type="chain" id="PRO_0000187839" description="Peptidyl-tRNA hydrolase">
    <location>
        <begin position="1"/>
        <end position="203"/>
    </location>
</feature>
<feature type="active site" description="Proton acceptor" evidence="1">
    <location>
        <position position="23"/>
    </location>
</feature>
<feature type="binding site" evidence="1">
    <location>
        <position position="18"/>
    </location>
    <ligand>
        <name>tRNA</name>
        <dbReference type="ChEBI" id="CHEBI:17843"/>
    </ligand>
</feature>
<feature type="binding site" evidence="1">
    <location>
        <position position="69"/>
    </location>
    <ligand>
        <name>tRNA</name>
        <dbReference type="ChEBI" id="CHEBI:17843"/>
    </ligand>
</feature>
<feature type="binding site" evidence="1">
    <location>
        <position position="71"/>
    </location>
    <ligand>
        <name>tRNA</name>
        <dbReference type="ChEBI" id="CHEBI:17843"/>
    </ligand>
</feature>
<feature type="binding site" evidence="1">
    <location>
        <position position="117"/>
    </location>
    <ligand>
        <name>tRNA</name>
        <dbReference type="ChEBI" id="CHEBI:17843"/>
    </ligand>
</feature>
<feature type="site" description="Discriminates between blocked and unblocked aminoacyl-tRNA" evidence="1">
    <location>
        <position position="13"/>
    </location>
</feature>
<feature type="site" description="Stabilizes the basic form of H active site to accept a proton" evidence="1">
    <location>
        <position position="96"/>
    </location>
</feature>
<dbReference type="EC" id="3.1.1.29" evidence="1"/>
<dbReference type="EMBL" id="BX569689">
    <property type="protein sequence ID" value="CAE06786.1"/>
    <property type="molecule type" value="Genomic_DNA"/>
</dbReference>
<dbReference type="RefSeq" id="WP_011127145.1">
    <property type="nucleotide sequence ID" value="NC_005070.1"/>
</dbReference>
<dbReference type="SMR" id="Q7U9I5"/>
<dbReference type="STRING" id="84588.SYNW0271"/>
<dbReference type="KEGG" id="syw:SYNW0271"/>
<dbReference type="eggNOG" id="COG0193">
    <property type="taxonomic scope" value="Bacteria"/>
</dbReference>
<dbReference type="HOGENOM" id="CLU_062456_4_1_3"/>
<dbReference type="Proteomes" id="UP000001422">
    <property type="component" value="Chromosome"/>
</dbReference>
<dbReference type="GO" id="GO:0005737">
    <property type="term" value="C:cytoplasm"/>
    <property type="evidence" value="ECO:0007669"/>
    <property type="project" value="UniProtKB-SubCell"/>
</dbReference>
<dbReference type="GO" id="GO:0004045">
    <property type="term" value="F:peptidyl-tRNA hydrolase activity"/>
    <property type="evidence" value="ECO:0007669"/>
    <property type="project" value="UniProtKB-UniRule"/>
</dbReference>
<dbReference type="GO" id="GO:0000049">
    <property type="term" value="F:tRNA binding"/>
    <property type="evidence" value="ECO:0007669"/>
    <property type="project" value="UniProtKB-UniRule"/>
</dbReference>
<dbReference type="GO" id="GO:0006515">
    <property type="term" value="P:protein quality control for misfolded or incompletely synthesized proteins"/>
    <property type="evidence" value="ECO:0007669"/>
    <property type="project" value="UniProtKB-UniRule"/>
</dbReference>
<dbReference type="GO" id="GO:0072344">
    <property type="term" value="P:rescue of stalled ribosome"/>
    <property type="evidence" value="ECO:0007669"/>
    <property type="project" value="UniProtKB-UniRule"/>
</dbReference>
<dbReference type="CDD" id="cd00462">
    <property type="entry name" value="PTH"/>
    <property type="match status" value="1"/>
</dbReference>
<dbReference type="FunFam" id="3.40.50.1470:FF:000001">
    <property type="entry name" value="Peptidyl-tRNA hydrolase"/>
    <property type="match status" value="1"/>
</dbReference>
<dbReference type="Gene3D" id="3.40.50.1470">
    <property type="entry name" value="Peptidyl-tRNA hydrolase"/>
    <property type="match status" value="1"/>
</dbReference>
<dbReference type="HAMAP" id="MF_00083">
    <property type="entry name" value="Pept_tRNA_hydro_bact"/>
    <property type="match status" value="1"/>
</dbReference>
<dbReference type="InterPro" id="IPR001328">
    <property type="entry name" value="Pept_tRNA_hydro"/>
</dbReference>
<dbReference type="InterPro" id="IPR018171">
    <property type="entry name" value="Pept_tRNA_hydro_CS"/>
</dbReference>
<dbReference type="InterPro" id="IPR036416">
    <property type="entry name" value="Pept_tRNA_hydro_sf"/>
</dbReference>
<dbReference type="NCBIfam" id="TIGR00447">
    <property type="entry name" value="pth"/>
    <property type="match status" value="1"/>
</dbReference>
<dbReference type="PANTHER" id="PTHR17224">
    <property type="entry name" value="PEPTIDYL-TRNA HYDROLASE"/>
    <property type="match status" value="1"/>
</dbReference>
<dbReference type="PANTHER" id="PTHR17224:SF1">
    <property type="entry name" value="PEPTIDYL-TRNA HYDROLASE"/>
    <property type="match status" value="1"/>
</dbReference>
<dbReference type="Pfam" id="PF01195">
    <property type="entry name" value="Pept_tRNA_hydro"/>
    <property type="match status" value="1"/>
</dbReference>
<dbReference type="SUPFAM" id="SSF53178">
    <property type="entry name" value="Peptidyl-tRNA hydrolase-like"/>
    <property type="match status" value="1"/>
</dbReference>
<dbReference type="PROSITE" id="PS01195">
    <property type="entry name" value="PEPT_TRNA_HYDROL_1"/>
    <property type="match status" value="1"/>
</dbReference>
<dbReference type="PROSITE" id="PS01196">
    <property type="entry name" value="PEPT_TRNA_HYDROL_2"/>
    <property type="match status" value="1"/>
</dbReference>
<accession>Q7U9I5</accession>
<sequence length="203" mass="22264">MADVLRLVVGLGNPGTKYEGTRHNIGFMALEQMASREGFSFRQQSKLHGLVAEHGIGESRLRLLMPQTYMNDSGRSIRAALDWFGFTPEQLLVLVDDMDIPLGRLRLRGQGSAGGHNGLRSTIQHLGTQAFPRLRIGIGAPADNPAERRARTVSHVLGSFSRAEQPEVDVVLDGVLEAIQRIQRQGLDRAGNWINGFCPASVE</sequence>
<reference key="1">
    <citation type="journal article" date="2003" name="Nature">
        <title>The genome of a motile marine Synechococcus.</title>
        <authorList>
            <person name="Palenik B."/>
            <person name="Brahamsha B."/>
            <person name="Larimer F.W."/>
            <person name="Land M.L."/>
            <person name="Hauser L."/>
            <person name="Chain P."/>
            <person name="Lamerdin J.E."/>
            <person name="Regala W."/>
            <person name="Allen E.E."/>
            <person name="McCarren J."/>
            <person name="Paulsen I.T."/>
            <person name="Dufresne A."/>
            <person name="Partensky F."/>
            <person name="Webb E.A."/>
            <person name="Waterbury J."/>
        </authorList>
    </citation>
    <scope>NUCLEOTIDE SEQUENCE [LARGE SCALE GENOMIC DNA]</scope>
    <source>
        <strain>WH8102</strain>
    </source>
</reference>
<keyword id="KW-0963">Cytoplasm</keyword>
<keyword id="KW-0378">Hydrolase</keyword>
<keyword id="KW-0694">RNA-binding</keyword>
<keyword id="KW-0820">tRNA-binding</keyword>
<name>PTH_PARMW</name>
<organism>
    <name type="scientific">Parasynechococcus marenigrum (strain WH8102)</name>
    <dbReference type="NCBI Taxonomy" id="84588"/>
    <lineage>
        <taxon>Bacteria</taxon>
        <taxon>Bacillati</taxon>
        <taxon>Cyanobacteriota</taxon>
        <taxon>Cyanophyceae</taxon>
        <taxon>Synechococcales</taxon>
        <taxon>Prochlorococcaceae</taxon>
        <taxon>Parasynechococcus</taxon>
        <taxon>Parasynechococcus marenigrum</taxon>
    </lineage>
</organism>
<gene>
    <name evidence="1" type="primary">pth</name>
    <name type="ordered locus">SYNW0271</name>
</gene>